<evidence type="ECO:0000255" key="1">
    <source>
        <dbReference type="HAMAP-Rule" id="MF_00461"/>
    </source>
</evidence>
<evidence type="ECO:0000256" key="2">
    <source>
        <dbReference type="SAM" id="MobiDB-lite"/>
    </source>
</evidence>
<comment type="function">
    <text evidence="1">Part of a membrane-bound complex that couples electron transfer with translocation of ions across the membrane. Required to maintain the reduced state of SoxR.</text>
</comment>
<comment type="cofactor">
    <cofactor evidence="1">
        <name>[4Fe-4S] cluster</name>
        <dbReference type="ChEBI" id="CHEBI:49883"/>
    </cofactor>
    <text evidence="1">Binds 2 [4Fe-4S] clusters per subunit.</text>
</comment>
<comment type="subunit">
    <text evidence="1">The complex is composed of six subunits: RsxA, RsxB, RsxC, RsxD, RsxE and RsxG.</text>
</comment>
<comment type="subcellular location">
    <subcellularLocation>
        <location evidence="1">Cell inner membrane</location>
        <topology evidence="1">Peripheral membrane protein</topology>
    </subcellularLocation>
</comment>
<comment type="similarity">
    <text evidence="1">Belongs to the 4Fe4S bacterial-type ferredoxin family. RnfC subfamily.</text>
</comment>
<dbReference type="EC" id="7.-.-.-" evidence="1"/>
<dbReference type="EMBL" id="CP001144">
    <property type="protein sequence ID" value="ACH76803.1"/>
    <property type="molecule type" value="Genomic_DNA"/>
</dbReference>
<dbReference type="RefSeq" id="WP_000915644.1">
    <property type="nucleotide sequence ID" value="NC_011205.1"/>
</dbReference>
<dbReference type="SMR" id="B5FIE7"/>
<dbReference type="KEGG" id="sed:SeD_A1885"/>
<dbReference type="HOGENOM" id="CLU_010808_2_1_6"/>
<dbReference type="Proteomes" id="UP000008322">
    <property type="component" value="Chromosome"/>
</dbReference>
<dbReference type="GO" id="GO:0005886">
    <property type="term" value="C:plasma membrane"/>
    <property type="evidence" value="ECO:0007669"/>
    <property type="project" value="UniProtKB-SubCell"/>
</dbReference>
<dbReference type="GO" id="GO:0051539">
    <property type="term" value="F:4 iron, 4 sulfur cluster binding"/>
    <property type="evidence" value="ECO:0007669"/>
    <property type="project" value="UniProtKB-KW"/>
</dbReference>
<dbReference type="GO" id="GO:0009055">
    <property type="term" value="F:electron transfer activity"/>
    <property type="evidence" value="ECO:0007669"/>
    <property type="project" value="InterPro"/>
</dbReference>
<dbReference type="GO" id="GO:0046872">
    <property type="term" value="F:metal ion binding"/>
    <property type="evidence" value="ECO:0007669"/>
    <property type="project" value="UniProtKB-KW"/>
</dbReference>
<dbReference type="GO" id="GO:0022900">
    <property type="term" value="P:electron transport chain"/>
    <property type="evidence" value="ECO:0007669"/>
    <property type="project" value="UniProtKB-UniRule"/>
</dbReference>
<dbReference type="Gene3D" id="3.30.70.20">
    <property type="match status" value="1"/>
</dbReference>
<dbReference type="Gene3D" id="3.40.50.11540">
    <property type="entry name" value="NADH-ubiquinone oxidoreductase 51kDa subunit"/>
    <property type="match status" value="1"/>
</dbReference>
<dbReference type="HAMAP" id="MF_00461">
    <property type="entry name" value="RsxC_RnfC"/>
    <property type="match status" value="1"/>
</dbReference>
<dbReference type="InterPro" id="IPR017896">
    <property type="entry name" value="4Fe4S_Fe-S-bd"/>
</dbReference>
<dbReference type="InterPro" id="IPR017900">
    <property type="entry name" value="4Fe4S_Fe_S_CS"/>
</dbReference>
<dbReference type="InterPro" id="IPR010208">
    <property type="entry name" value="Ion_transpt_RnfC/RsxC"/>
</dbReference>
<dbReference type="InterPro" id="IPR011538">
    <property type="entry name" value="Nuo51_FMN-bd"/>
</dbReference>
<dbReference type="InterPro" id="IPR037225">
    <property type="entry name" value="Nuo51_FMN-bd_sf"/>
</dbReference>
<dbReference type="InterPro" id="IPR026902">
    <property type="entry name" value="RnfC_N"/>
</dbReference>
<dbReference type="InterPro" id="IPR019554">
    <property type="entry name" value="Soluble_ligand-bd"/>
</dbReference>
<dbReference type="NCBIfam" id="NF003454">
    <property type="entry name" value="PRK05035.1"/>
    <property type="match status" value="1"/>
</dbReference>
<dbReference type="NCBIfam" id="TIGR01945">
    <property type="entry name" value="rnfC"/>
    <property type="match status" value="1"/>
</dbReference>
<dbReference type="PANTHER" id="PTHR43034">
    <property type="entry name" value="ION-TRANSLOCATING OXIDOREDUCTASE COMPLEX SUBUNIT C"/>
    <property type="match status" value="1"/>
</dbReference>
<dbReference type="PANTHER" id="PTHR43034:SF2">
    <property type="entry name" value="ION-TRANSLOCATING OXIDOREDUCTASE COMPLEX SUBUNIT C"/>
    <property type="match status" value="1"/>
</dbReference>
<dbReference type="Pfam" id="PF01512">
    <property type="entry name" value="Complex1_51K"/>
    <property type="match status" value="1"/>
</dbReference>
<dbReference type="Pfam" id="PF12838">
    <property type="entry name" value="Fer4_7"/>
    <property type="match status" value="1"/>
</dbReference>
<dbReference type="Pfam" id="PF13375">
    <property type="entry name" value="RnfC_N"/>
    <property type="match status" value="1"/>
</dbReference>
<dbReference type="Pfam" id="PF10531">
    <property type="entry name" value="SLBB"/>
    <property type="match status" value="1"/>
</dbReference>
<dbReference type="SUPFAM" id="SSF46548">
    <property type="entry name" value="alpha-helical ferredoxin"/>
    <property type="match status" value="1"/>
</dbReference>
<dbReference type="SUPFAM" id="SSF142019">
    <property type="entry name" value="Nqo1 FMN-binding domain-like"/>
    <property type="match status" value="1"/>
</dbReference>
<dbReference type="PROSITE" id="PS00198">
    <property type="entry name" value="4FE4S_FER_1"/>
    <property type="match status" value="2"/>
</dbReference>
<dbReference type="PROSITE" id="PS51379">
    <property type="entry name" value="4FE4S_FER_2"/>
    <property type="match status" value="2"/>
</dbReference>
<keyword id="KW-0004">4Fe-4S</keyword>
<keyword id="KW-0997">Cell inner membrane</keyword>
<keyword id="KW-1003">Cell membrane</keyword>
<keyword id="KW-0249">Electron transport</keyword>
<keyword id="KW-0408">Iron</keyword>
<keyword id="KW-0411">Iron-sulfur</keyword>
<keyword id="KW-0472">Membrane</keyword>
<keyword id="KW-0479">Metal-binding</keyword>
<keyword id="KW-0677">Repeat</keyword>
<keyword id="KW-1278">Translocase</keyword>
<keyword id="KW-0813">Transport</keyword>
<gene>
    <name evidence="1" type="primary">rsxC</name>
    <name type="ordered locus">SeD_A1885</name>
</gene>
<reference key="1">
    <citation type="journal article" date="2011" name="J. Bacteriol.">
        <title>Comparative genomics of 28 Salmonella enterica isolates: evidence for CRISPR-mediated adaptive sublineage evolution.</title>
        <authorList>
            <person name="Fricke W.F."/>
            <person name="Mammel M.K."/>
            <person name="McDermott P.F."/>
            <person name="Tartera C."/>
            <person name="White D.G."/>
            <person name="Leclerc J.E."/>
            <person name="Ravel J."/>
            <person name="Cebula T.A."/>
        </authorList>
    </citation>
    <scope>NUCLEOTIDE SEQUENCE [LARGE SCALE GENOMIC DNA]</scope>
    <source>
        <strain>CT_02021853</strain>
    </source>
</reference>
<protein>
    <recommendedName>
        <fullName evidence="1">Ion-translocating oxidoreductase complex subunit C</fullName>
        <ecNumber evidence="1">7.-.-.-</ecNumber>
    </recommendedName>
    <alternativeName>
        <fullName evidence="1">Rsx electron transport complex subunit C</fullName>
    </alternativeName>
</protein>
<name>RSXC_SALDC</name>
<accession>B5FIE7</accession>
<organism>
    <name type="scientific">Salmonella dublin (strain CT_02021853)</name>
    <dbReference type="NCBI Taxonomy" id="439851"/>
    <lineage>
        <taxon>Bacteria</taxon>
        <taxon>Pseudomonadati</taxon>
        <taxon>Pseudomonadota</taxon>
        <taxon>Gammaproteobacteria</taxon>
        <taxon>Enterobacterales</taxon>
        <taxon>Enterobacteriaceae</taxon>
        <taxon>Salmonella</taxon>
    </lineage>
</organism>
<feature type="chain" id="PRO_1000125362" description="Ion-translocating oxidoreductase complex subunit C">
    <location>
        <begin position="1"/>
        <end position="704"/>
    </location>
</feature>
<feature type="domain" description="4Fe-4S ferredoxin-type 1" evidence="1">
    <location>
        <begin position="368"/>
        <end position="397"/>
    </location>
</feature>
<feature type="domain" description="4Fe-4S ferredoxin-type 2" evidence="1">
    <location>
        <begin position="407"/>
        <end position="436"/>
    </location>
</feature>
<feature type="region of interest" description="Disordered" evidence="2">
    <location>
        <begin position="536"/>
        <end position="685"/>
    </location>
</feature>
<feature type="compositionally biased region" description="Low complexity" evidence="2">
    <location>
        <begin position="556"/>
        <end position="565"/>
    </location>
</feature>
<feature type="binding site" evidence="1">
    <location>
        <position position="377"/>
    </location>
    <ligand>
        <name>[4Fe-4S] cluster</name>
        <dbReference type="ChEBI" id="CHEBI:49883"/>
        <label>1</label>
    </ligand>
</feature>
<feature type="binding site" evidence="1">
    <location>
        <position position="380"/>
    </location>
    <ligand>
        <name>[4Fe-4S] cluster</name>
        <dbReference type="ChEBI" id="CHEBI:49883"/>
        <label>1</label>
    </ligand>
</feature>
<feature type="binding site" evidence="1">
    <location>
        <position position="383"/>
    </location>
    <ligand>
        <name>[4Fe-4S] cluster</name>
        <dbReference type="ChEBI" id="CHEBI:49883"/>
        <label>1</label>
    </ligand>
</feature>
<feature type="binding site" evidence="1">
    <location>
        <position position="387"/>
    </location>
    <ligand>
        <name>[4Fe-4S] cluster</name>
        <dbReference type="ChEBI" id="CHEBI:49883"/>
        <label>2</label>
    </ligand>
</feature>
<feature type="binding site" evidence="1">
    <location>
        <position position="416"/>
    </location>
    <ligand>
        <name>[4Fe-4S] cluster</name>
        <dbReference type="ChEBI" id="CHEBI:49883"/>
        <label>2</label>
    </ligand>
</feature>
<feature type="binding site" evidence="1">
    <location>
        <position position="419"/>
    </location>
    <ligand>
        <name>[4Fe-4S] cluster</name>
        <dbReference type="ChEBI" id="CHEBI:49883"/>
        <label>2</label>
    </ligand>
</feature>
<feature type="binding site" evidence="1">
    <location>
        <position position="422"/>
    </location>
    <ligand>
        <name>[4Fe-4S] cluster</name>
        <dbReference type="ChEBI" id="CHEBI:49883"/>
        <label>2</label>
    </ligand>
</feature>
<feature type="binding site" evidence="1">
    <location>
        <position position="426"/>
    </location>
    <ligand>
        <name>[4Fe-4S] cluster</name>
        <dbReference type="ChEBI" id="CHEBI:49883"/>
        <label>1</label>
    </ligand>
</feature>
<proteinExistence type="inferred from homology"/>
<sequence length="704" mass="75467">MLKLFSAFRKDKIWDFDGGIHPPEMKTQSNGTPLRQVPLAPRFVIPLKQHIGAEGELCVSVGDRVLRGQALTRGRGRMLPVHAPTSGTVIAIAPHSTAHPSALAELSVIIDADGEDRWIEREGWSDYRAHSREALIERIHQYGVAGLGGAGFPTGVKLQGGGDKITTLIINAAECEPYITADDRLMQDCAAQIVEGIRILAHILQPREVLIGIEDNKPQAISMLRAVLADAHDISLRVIPTKYPSGGAKQLTQILTGKQVPHGGRSSDIGVLMQNVGTAYAVKRAVVDGEPITERVVTLTGEAVSRPGNVWARLGTPVRHLLNDAGFCPSADQMVIMGGPLMGFTLPWLDVPVVKITNCLLAPSVAEMGAPQEEKSCIRCSACADACPADLLPQQLYWFSKGQQHDKATAHHIADCIECGACAWVCPSNIPLVQYFRQEKAEINAIRLEEKRAAEAKARFEARQARLEREKAARLARHKSAAVQPAAKDQDAIAAALARVKEKQAQATQPVVIQAGSQPDNSAVIAAREARKAQARAKQAAHPMADSAIPGNDPSKAAVEAAIARAKARKQEQQAGSEPVEAVDPRKAAVEAAIARAKARKQEQQTGSEPAEPIDPRKAAVEAAIVRAKARKQEQQTGSEPAEPIDPRKAAVEAAIARAKARKQEQQTGSEPAEPADPRKAAVAAAIARVQAKKAAQQQVVNED</sequence>